<evidence type="ECO:0000250" key="1"/>
<evidence type="ECO:0000255" key="2"/>
<evidence type="ECO:0000305" key="3"/>
<proteinExistence type="evidence at transcript level"/>
<organism>
    <name type="scientific">Bos taurus</name>
    <name type="common">Bovine</name>
    <dbReference type="NCBI Taxonomy" id="9913"/>
    <lineage>
        <taxon>Eukaryota</taxon>
        <taxon>Metazoa</taxon>
        <taxon>Chordata</taxon>
        <taxon>Craniata</taxon>
        <taxon>Vertebrata</taxon>
        <taxon>Euteleostomi</taxon>
        <taxon>Mammalia</taxon>
        <taxon>Eutheria</taxon>
        <taxon>Laurasiatheria</taxon>
        <taxon>Artiodactyla</taxon>
        <taxon>Ruminantia</taxon>
        <taxon>Pecora</taxon>
        <taxon>Bovidae</taxon>
        <taxon>Bovinae</taxon>
        <taxon>Bos</taxon>
    </lineage>
</organism>
<name>TM9S1_BOVIN</name>
<gene>
    <name type="primary">TM9SF1</name>
</gene>
<feature type="signal peptide" evidence="2">
    <location>
        <begin position="1"/>
        <end position="27"/>
    </location>
</feature>
<feature type="chain" id="PRO_0000311808" description="Transmembrane 9 superfamily member 1">
    <location>
        <begin position="28"/>
        <end position="606"/>
    </location>
</feature>
<feature type="transmembrane region" description="Helical" evidence="2">
    <location>
        <begin position="237"/>
        <end position="257"/>
    </location>
</feature>
<feature type="transmembrane region" description="Helical" evidence="2">
    <location>
        <begin position="310"/>
        <end position="330"/>
    </location>
</feature>
<feature type="transmembrane region" description="Helical" evidence="2">
    <location>
        <begin position="339"/>
        <end position="359"/>
    </location>
</feature>
<feature type="transmembrane region" description="Helical" evidence="2">
    <location>
        <begin position="373"/>
        <end position="393"/>
    </location>
</feature>
<feature type="transmembrane region" description="Helical" evidence="2">
    <location>
        <begin position="412"/>
        <end position="432"/>
    </location>
</feature>
<feature type="transmembrane region" description="Helical" evidence="2">
    <location>
        <begin position="469"/>
        <end position="489"/>
    </location>
</feature>
<feature type="transmembrane region" description="Helical" evidence="2">
    <location>
        <begin position="499"/>
        <end position="519"/>
    </location>
</feature>
<feature type="transmembrane region" description="Helical" evidence="2">
    <location>
        <begin position="535"/>
        <end position="555"/>
    </location>
</feature>
<feature type="transmembrane region" description="Helical" evidence="2">
    <location>
        <begin position="570"/>
        <end position="590"/>
    </location>
</feature>
<feature type="glycosylation site" description="N-linked (GlcNAc...) asparagine" evidence="2">
    <location>
        <position position="178"/>
    </location>
</feature>
<feature type="glycosylation site" description="N-linked (GlcNAc...) asparagine" evidence="2">
    <location>
        <position position="401"/>
    </location>
</feature>
<feature type="glycosylation site" description="N-linked (GlcNAc...) asparagine" evidence="2">
    <location>
        <position position="559"/>
    </location>
</feature>
<keyword id="KW-0072">Autophagy</keyword>
<keyword id="KW-0968">Cytoplasmic vesicle</keyword>
<keyword id="KW-0325">Glycoprotein</keyword>
<keyword id="KW-0458">Lysosome</keyword>
<keyword id="KW-0472">Membrane</keyword>
<keyword id="KW-1185">Reference proteome</keyword>
<keyword id="KW-0732">Signal</keyword>
<keyword id="KW-0812">Transmembrane</keyword>
<keyword id="KW-1133">Transmembrane helix</keyword>
<protein>
    <recommendedName>
        <fullName>Transmembrane 9 superfamily member 1</fullName>
    </recommendedName>
</protein>
<comment type="function">
    <text evidence="1">Plays an essential role in autophagy.</text>
</comment>
<comment type="subcellular location">
    <subcellularLocation>
        <location>Lysosome membrane</location>
        <topology>Multi-pass membrane protein</topology>
    </subcellularLocation>
    <subcellularLocation>
        <location evidence="1">Cytoplasmic vesicle</location>
        <location evidence="1">Autophagosome membrane</location>
        <topology evidence="1">Multi-pass membrane protein</topology>
    </subcellularLocation>
</comment>
<comment type="similarity">
    <text evidence="3">Belongs to the nonaspanin (TM9SF) (TC 9.A.2) family.</text>
</comment>
<sequence length="606" mass="69162">MTVLGHPRSWSCRWWPLLLLLLLTGREPGVEGVTHYKAGDPVILYVNKVGPYHNPQETYHYYQLPVCCPEKIRHKSLSLGEVLDGDRMAESLYEIRFRENVEKRVLCHMQLSSAQVEQLRQAIEELYYFEFVVDDLPIRGFVGYMEESGFLPHSHKIGLWTHLDFHLEFHGDRIIFANVSVRDVKPHSLDGLRPDEFLGLTHTYSVRWSETSVERRSDRRRGDDGGFFPRTLEIHWLSIINSMVLVFLLVGFVAVILMRVLRNDLARYNLDEETASAGSGDDFDQSDNGWKIIHTDVFRFPPYRGLLCAVLGVGAQFLALGTGIIVMALLGMFNVHRHGAINSAAILLYALTCCISGYVSSHFYRQIGGERWVWNIILTTSLFSVPFFLTWSVVNSVHWANGSTQALPATTILLLLTVWLLVGFPLTVIGGIFGKNNASPFDAPCRTKNIAREIPPQPWYKSTLVHMTVGGFLPFSAISVELYYIFATVWGREQYTLYGILFFVFAILLSVGACISIALTYFQLSGEDYRWWWRSVLSVGSTGLFIFLYSVFYYARRSNMSGTVQTVEFFGYSLLTGYVFFLMLGTISFFSSLKFIRYIYVNLKMD</sequence>
<reference key="1">
    <citation type="submission" date="2007-03" db="EMBL/GenBank/DDBJ databases">
        <authorList>
            <consortium name="NIH - Mammalian Gene Collection (MGC) project"/>
        </authorList>
    </citation>
    <scope>NUCLEOTIDE SEQUENCE [LARGE SCALE MRNA]</scope>
    <source>
        <strain>Hereford</strain>
        <tissue>Hippocampus</tissue>
    </source>
</reference>
<dbReference type="EMBL" id="BC134551">
    <property type="protein sequence ID" value="AAI34552.1"/>
    <property type="molecule type" value="mRNA"/>
</dbReference>
<dbReference type="RefSeq" id="NP_001077212.1">
    <property type="nucleotide sequence ID" value="NM_001083743.1"/>
</dbReference>
<dbReference type="FunCoup" id="A4IFE9">
    <property type="interactions" value="2475"/>
</dbReference>
<dbReference type="STRING" id="9913.ENSBTAP00000003509"/>
<dbReference type="GlyCosmos" id="A4IFE9">
    <property type="glycosylation" value="3 sites, No reported glycans"/>
</dbReference>
<dbReference type="GlyGen" id="A4IFE9">
    <property type="glycosylation" value="3 sites"/>
</dbReference>
<dbReference type="PaxDb" id="9913-ENSBTAP00000003509"/>
<dbReference type="GeneID" id="539478"/>
<dbReference type="KEGG" id="bta:539478"/>
<dbReference type="CTD" id="10548"/>
<dbReference type="eggNOG" id="KOG1277">
    <property type="taxonomic scope" value="Eukaryota"/>
</dbReference>
<dbReference type="InParanoid" id="A4IFE9"/>
<dbReference type="OrthoDB" id="1666796at2759"/>
<dbReference type="Proteomes" id="UP000009136">
    <property type="component" value="Unplaced"/>
</dbReference>
<dbReference type="GO" id="GO:0000421">
    <property type="term" value="C:autophagosome membrane"/>
    <property type="evidence" value="ECO:0007669"/>
    <property type="project" value="UniProtKB-SubCell"/>
</dbReference>
<dbReference type="GO" id="GO:0031410">
    <property type="term" value="C:cytoplasmic vesicle"/>
    <property type="evidence" value="ECO:0007669"/>
    <property type="project" value="UniProtKB-KW"/>
</dbReference>
<dbReference type="GO" id="GO:0005765">
    <property type="term" value="C:lysosomal membrane"/>
    <property type="evidence" value="ECO:0007669"/>
    <property type="project" value="UniProtKB-SubCell"/>
</dbReference>
<dbReference type="GO" id="GO:0016020">
    <property type="term" value="C:membrane"/>
    <property type="evidence" value="ECO:0000318"/>
    <property type="project" value="GO_Central"/>
</dbReference>
<dbReference type="GO" id="GO:0006914">
    <property type="term" value="P:autophagy"/>
    <property type="evidence" value="ECO:0007669"/>
    <property type="project" value="UniProtKB-KW"/>
</dbReference>
<dbReference type="GO" id="GO:0072657">
    <property type="term" value="P:protein localization to membrane"/>
    <property type="evidence" value="ECO:0000318"/>
    <property type="project" value="GO_Central"/>
</dbReference>
<dbReference type="InterPro" id="IPR004240">
    <property type="entry name" value="EMP70"/>
</dbReference>
<dbReference type="PANTHER" id="PTHR10766:SF177">
    <property type="entry name" value="TRANSMEMBRANE 9 SUPERFAMILY MEMBER 1"/>
    <property type="match status" value="1"/>
</dbReference>
<dbReference type="PANTHER" id="PTHR10766">
    <property type="entry name" value="TRANSMEMBRANE 9 SUPERFAMILY PROTEIN"/>
    <property type="match status" value="1"/>
</dbReference>
<dbReference type="Pfam" id="PF02990">
    <property type="entry name" value="EMP70"/>
    <property type="match status" value="1"/>
</dbReference>
<accession>A4IFE9</accession>